<accession>Q256C5</accession>
<proteinExistence type="inferred from homology"/>
<name>DER_CHLFF</name>
<organism>
    <name type="scientific">Chlamydia felis (strain Fe/C-56)</name>
    <name type="common">Chlamydophila felis</name>
    <dbReference type="NCBI Taxonomy" id="264202"/>
    <lineage>
        <taxon>Bacteria</taxon>
        <taxon>Pseudomonadati</taxon>
        <taxon>Chlamydiota</taxon>
        <taxon>Chlamydiia</taxon>
        <taxon>Chlamydiales</taxon>
        <taxon>Chlamydiaceae</taxon>
        <taxon>Chlamydia/Chlamydophila group</taxon>
        <taxon>Chlamydia</taxon>
    </lineage>
</organism>
<feature type="chain" id="PRO_1000011600" description="GTPase Der">
    <location>
        <begin position="1"/>
        <end position="475"/>
    </location>
</feature>
<feature type="domain" description="EngA-type G 1">
    <location>
        <begin position="2"/>
        <end position="166"/>
    </location>
</feature>
<feature type="domain" description="EngA-type G 2">
    <location>
        <begin position="213"/>
        <end position="386"/>
    </location>
</feature>
<feature type="domain" description="KH-like" evidence="1">
    <location>
        <begin position="387"/>
        <end position="471"/>
    </location>
</feature>
<feature type="binding site" evidence="1">
    <location>
        <begin position="8"/>
        <end position="15"/>
    </location>
    <ligand>
        <name>GTP</name>
        <dbReference type="ChEBI" id="CHEBI:37565"/>
        <label>1</label>
    </ligand>
</feature>
<feature type="binding site" evidence="1">
    <location>
        <begin position="55"/>
        <end position="59"/>
    </location>
    <ligand>
        <name>GTP</name>
        <dbReference type="ChEBI" id="CHEBI:37565"/>
        <label>1</label>
    </ligand>
</feature>
<feature type="binding site" evidence="1">
    <location>
        <begin position="118"/>
        <end position="121"/>
    </location>
    <ligand>
        <name>GTP</name>
        <dbReference type="ChEBI" id="CHEBI:37565"/>
        <label>1</label>
    </ligand>
</feature>
<feature type="binding site" evidence="1">
    <location>
        <begin position="219"/>
        <end position="226"/>
    </location>
    <ligand>
        <name>GTP</name>
        <dbReference type="ChEBI" id="CHEBI:37565"/>
        <label>2</label>
    </ligand>
</feature>
<feature type="binding site" evidence="1">
    <location>
        <begin position="266"/>
        <end position="270"/>
    </location>
    <ligand>
        <name>GTP</name>
        <dbReference type="ChEBI" id="CHEBI:37565"/>
        <label>2</label>
    </ligand>
</feature>
<feature type="binding site" evidence="1">
    <location>
        <begin position="331"/>
        <end position="334"/>
    </location>
    <ligand>
        <name>GTP</name>
        <dbReference type="ChEBI" id="CHEBI:37565"/>
        <label>2</label>
    </ligand>
</feature>
<dbReference type="EMBL" id="AP006861">
    <property type="protein sequence ID" value="BAE80863.1"/>
    <property type="molecule type" value="Genomic_DNA"/>
</dbReference>
<dbReference type="RefSeq" id="WP_011457648.1">
    <property type="nucleotide sequence ID" value="NC_007899.1"/>
</dbReference>
<dbReference type="SMR" id="Q256C5"/>
<dbReference type="STRING" id="264202.CF0091"/>
<dbReference type="KEGG" id="cfe:CF0091"/>
<dbReference type="eggNOG" id="COG1160">
    <property type="taxonomic scope" value="Bacteria"/>
</dbReference>
<dbReference type="HOGENOM" id="CLU_016077_6_2_0"/>
<dbReference type="OrthoDB" id="9805918at2"/>
<dbReference type="Proteomes" id="UP000001260">
    <property type="component" value="Chromosome"/>
</dbReference>
<dbReference type="GO" id="GO:0005525">
    <property type="term" value="F:GTP binding"/>
    <property type="evidence" value="ECO:0007669"/>
    <property type="project" value="UniProtKB-UniRule"/>
</dbReference>
<dbReference type="GO" id="GO:0043022">
    <property type="term" value="F:ribosome binding"/>
    <property type="evidence" value="ECO:0007669"/>
    <property type="project" value="TreeGrafter"/>
</dbReference>
<dbReference type="GO" id="GO:0042254">
    <property type="term" value="P:ribosome biogenesis"/>
    <property type="evidence" value="ECO:0007669"/>
    <property type="project" value="UniProtKB-KW"/>
</dbReference>
<dbReference type="CDD" id="cd01894">
    <property type="entry name" value="EngA1"/>
    <property type="match status" value="1"/>
</dbReference>
<dbReference type="CDD" id="cd01895">
    <property type="entry name" value="EngA2"/>
    <property type="match status" value="1"/>
</dbReference>
<dbReference type="FunFam" id="3.40.50.300:FF:000040">
    <property type="entry name" value="GTPase Der"/>
    <property type="match status" value="1"/>
</dbReference>
<dbReference type="Gene3D" id="3.30.300.20">
    <property type="match status" value="1"/>
</dbReference>
<dbReference type="Gene3D" id="3.40.50.300">
    <property type="entry name" value="P-loop containing nucleotide triphosphate hydrolases"/>
    <property type="match status" value="2"/>
</dbReference>
<dbReference type="HAMAP" id="MF_00195">
    <property type="entry name" value="GTPase_Der"/>
    <property type="match status" value="1"/>
</dbReference>
<dbReference type="InterPro" id="IPR031166">
    <property type="entry name" value="G_ENGA"/>
</dbReference>
<dbReference type="InterPro" id="IPR006073">
    <property type="entry name" value="GTP-bd"/>
</dbReference>
<dbReference type="InterPro" id="IPR016484">
    <property type="entry name" value="GTPase_Der"/>
</dbReference>
<dbReference type="InterPro" id="IPR032859">
    <property type="entry name" value="KH_dom-like"/>
</dbReference>
<dbReference type="InterPro" id="IPR015946">
    <property type="entry name" value="KH_dom-like_a/b"/>
</dbReference>
<dbReference type="InterPro" id="IPR027417">
    <property type="entry name" value="P-loop_NTPase"/>
</dbReference>
<dbReference type="InterPro" id="IPR005225">
    <property type="entry name" value="Small_GTP-bd"/>
</dbReference>
<dbReference type="NCBIfam" id="TIGR03594">
    <property type="entry name" value="GTPase_EngA"/>
    <property type="match status" value="1"/>
</dbReference>
<dbReference type="NCBIfam" id="TIGR00231">
    <property type="entry name" value="small_GTP"/>
    <property type="match status" value="2"/>
</dbReference>
<dbReference type="PANTHER" id="PTHR43834">
    <property type="entry name" value="GTPASE DER"/>
    <property type="match status" value="1"/>
</dbReference>
<dbReference type="PANTHER" id="PTHR43834:SF6">
    <property type="entry name" value="GTPASE DER"/>
    <property type="match status" value="1"/>
</dbReference>
<dbReference type="Pfam" id="PF14714">
    <property type="entry name" value="KH_dom-like"/>
    <property type="match status" value="1"/>
</dbReference>
<dbReference type="Pfam" id="PF01926">
    <property type="entry name" value="MMR_HSR1"/>
    <property type="match status" value="2"/>
</dbReference>
<dbReference type="PIRSF" id="PIRSF006485">
    <property type="entry name" value="GTP-binding_EngA"/>
    <property type="match status" value="1"/>
</dbReference>
<dbReference type="PRINTS" id="PR00326">
    <property type="entry name" value="GTP1OBG"/>
</dbReference>
<dbReference type="SUPFAM" id="SSF52540">
    <property type="entry name" value="P-loop containing nucleoside triphosphate hydrolases"/>
    <property type="match status" value="2"/>
</dbReference>
<dbReference type="PROSITE" id="PS51712">
    <property type="entry name" value="G_ENGA"/>
    <property type="match status" value="2"/>
</dbReference>
<sequence length="475" mass="53775">MLRIAILGRPNVGKSSLFNRMCKQSLAIVNSQEGTTRDRLYGEIRGWSVPVQVIDTGGVDKDSEDHFQKHIYKQALAGAGEADILLLVIDIRCGITEQDAAIAKQLLPLKKPLILVANKADTLKDEHHVHELYKIGISEILTVSASHDKHIDRLLQKIKTLANIPEIAEEPVEEIEEEAQISSHEILSPEESLSDYEEEEILFSKPPASDKPLKIALIGRPNVGKSSIINGLLNEERCIIDNIPGTTRDNVDILYSHNDRSYLFIDTAGLRKMKSVKNSIEWISSSRTEKAIARADICLLVIDATHCLSSYDKRILSLISKHKKPHIILANKWDLIKGVRMEHYIRDLRSTDVYIGQSRILCISAAKKRNLRHIFSSIDELHETVSRKVPTPVVNKTLASALQKHHPQVINGRRLRIYYAIHKTATPFQFLLFINAKSLLTKHYECYLKNTLKTSFNLYGIPFDLEIKEKAKRTN</sequence>
<reference key="1">
    <citation type="journal article" date="2006" name="DNA Res.">
        <title>Genome sequence of the cat pathogen, Chlamydophila felis.</title>
        <authorList>
            <person name="Azuma Y."/>
            <person name="Hirakawa H."/>
            <person name="Yamashita A."/>
            <person name="Cai Y."/>
            <person name="Rahman M.A."/>
            <person name="Suzuki H."/>
            <person name="Mitaku S."/>
            <person name="Toh H."/>
            <person name="Goto S."/>
            <person name="Murakami T."/>
            <person name="Sugi K."/>
            <person name="Hayashi H."/>
            <person name="Fukushi H."/>
            <person name="Hattori M."/>
            <person name="Kuhara S."/>
            <person name="Shirai M."/>
        </authorList>
    </citation>
    <scope>NUCLEOTIDE SEQUENCE [LARGE SCALE GENOMIC DNA]</scope>
    <source>
        <strain>Fe/C-56</strain>
    </source>
</reference>
<gene>
    <name evidence="1" type="primary">der</name>
    <name type="synonym">engA</name>
    <name type="ordered locus">CF0091</name>
</gene>
<comment type="function">
    <text evidence="1">GTPase that plays an essential role in the late steps of ribosome biogenesis.</text>
</comment>
<comment type="subunit">
    <text evidence="1">Associates with the 50S ribosomal subunit.</text>
</comment>
<comment type="similarity">
    <text evidence="1">Belongs to the TRAFAC class TrmE-Era-EngA-EngB-Septin-like GTPase superfamily. EngA (Der) GTPase family.</text>
</comment>
<protein>
    <recommendedName>
        <fullName evidence="1">GTPase Der</fullName>
    </recommendedName>
    <alternativeName>
        <fullName evidence="1">GTP-binding protein EngA</fullName>
    </alternativeName>
</protein>
<keyword id="KW-0342">GTP-binding</keyword>
<keyword id="KW-0547">Nucleotide-binding</keyword>
<keyword id="KW-0677">Repeat</keyword>
<keyword id="KW-0690">Ribosome biogenesis</keyword>
<evidence type="ECO:0000255" key="1">
    <source>
        <dbReference type="HAMAP-Rule" id="MF_00195"/>
    </source>
</evidence>